<reference key="1">
    <citation type="journal article" date="2005" name="Science">
        <title>The genome of the basidiomycetous yeast and human pathogen Cryptococcus neoformans.</title>
        <authorList>
            <person name="Loftus B.J."/>
            <person name="Fung E."/>
            <person name="Roncaglia P."/>
            <person name="Rowley D."/>
            <person name="Amedeo P."/>
            <person name="Bruno D."/>
            <person name="Vamathevan J."/>
            <person name="Miranda M."/>
            <person name="Anderson I.J."/>
            <person name="Fraser J.A."/>
            <person name="Allen J.E."/>
            <person name="Bosdet I.E."/>
            <person name="Brent M.R."/>
            <person name="Chiu R."/>
            <person name="Doering T.L."/>
            <person name="Donlin M.J."/>
            <person name="D'Souza C.A."/>
            <person name="Fox D.S."/>
            <person name="Grinberg V."/>
            <person name="Fu J."/>
            <person name="Fukushima M."/>
            <person name="Haas B.J."/>
            <person name="Huang J.C."/>
            <person name="Janbon G."/>
            <person name="Jones S.J.M."/>
            <person name="Koo H.L."/>
            <person name="Krzywinski M.I."/>
            <person name="Kwon-Chung K.J."/>
            <person name="Lengeler K.B."/>
            <person name="Maiti R."/>
            <person name="Marra M.A."/>
            <person name="Marra R.E."/>
            <person name="Mathewson C.A."/>
            <person name="Mitchell T.G."/>
            <person name="Pertea M."/>
            <person name="Riggs F.R."/>
            <person name="Salzberg S.L."/>
            <person name="Schein J.E."/>
            <person name="Shvartsbeyn A."/>
            <person name="Shin H."/>
            <person name="Shumway M."/>
            <person name="Specht C.A."/>
            <person name="Suh B.B."/>
            <person name="Tenney A."/>
            <person name="Utterback T.R."/>
            <person name="Wickes B.L."/>
            <person name="Wortman J.R."/>
            <person name="Wye N.H."/>
            <person name="Kronstad J.W."/>
            <person name="Lodge J.K."/>
            <person name="Heitman J."/>
            <person name="Davis R.W."/>
            <person name="Fraser C.M."/>
            <person name="Hyman R.W."/>
        </authorList>
    </citation>
    <scope>NUCLEOTIDE SEQUENCE [LARGE SCALE GENOMIC DNA]</scope>
    <source>
        <strain>B-3501A</strain>
    </source>
</reference>
<name>TMEDA_CRYNB</name>
<accession>P0CN73</accession>
<accession>Q55X80</accession>
<accession>Q5KMQ3</accession>
<dbReference type="EMBL" id="AAEY01000011">
    <property type="protein sequence ID" value="EAL22307.1"/>
    <property type="molecule type" value="Genomic_DNA"/>
</dbReference>
<dbReference type="RefSeq" id="XP_776954.1">
    <property type="nucleotide sequence ID" value="XM_771861.1"/>
</dbReference>
<dbReference type="SMR" id="P0CN73"/>
<dbReference type="GeneID" id="4934576"/>
<dbReference type="KEGG" id="cnb:CNBB4820"/>
<dbReference type="VEuPathDB" id="FungiDB:CNBB4820"/>
<dbReference type="HOGENOM" id="CLU_066963_3_0_1"/>
<dbReference type="OrthoDB" id="1336at5206"/>
<dbReference type="GO" id="GO:0030134">
    <property type="term" value="C:COPII-coated ER to Golgi transport vesicle"/>
    <property type="evidence" value="ECO:0007669"/>
    <property type="project" value="EnsemblFungi"/>
</dbReference>
<dbReference type="GO" id="GO:0005789">
    <property type="term" value="C:endoplasmic reticulum membrane"/>
    <property type="evidence" value="ECO:0007669"/>
    <property type="project" value="UniProtKB-SubCell"/>
</dbReference>
<dbReference type="GO" id="GO:0000139">
    <property type="term" value="C:Golgi membrane"/>
    <property type="evidence" value="ECO:0007669"/>
    <property type="project" value="UniProtKB-SubCell"/>
</dbReference>
<dbReference type="GO" id="GO:0006888">
    <property type="term" value="P:endoplasmic reticulum to Golgi vesicle-mediated transport"/>
    <property type="evidence" value="ECO:0007669"/>
    <property type="project" value="EnsemblFungi"/>
</dbReference>
<dbReference type="GO" id="GO:0015031">
    <property type="term" value="P:protein transport"/>
    <property type="evidence" value="ECO:0007669"/>
    <property type="project" value="UniProtKB-KW"/>
</dbReference>
<dbReference type="InterPro" id="IPR015720">
    <property type="entry name" value="Emp24-like"/>
</dbReference>
<dbReference type="InterPro" id="IPR009038">
    <property type="entry name" value="GOLD_dom"/>
</dbReference>
<dbReference type="PANTHER" id="PTHR22811">
    <property type="entry name" value="TRANSMEMBRANE EMP24 DOMAIN-CONTAINING PROTEIN"/>
    <property type="match status" value="1"/>
</dbReference>
<dbReference type="Pfam" id="PF01105">
    <property type="entry name" value="EMP24_GP25L"/>
    <property type="match status" value="1"/>
</dbReference>
<dbReference type="SMART" id="SM01190">
    <property type="entry name" value="EMP24_GP25L"/>
    <property type="match status" value="1"/>
</dbReference>
<gene>
    <name type="primary">ERV25</name>
    <name type="ordered locus">CNBB4820</name>
</gene>
<proteinExistence type="inferred from homology"/>
<organism>
    <name type="scientific">Cryptococcus neoformans var. neoformans serotype D (strain B-3501A)</name>
    <name type="common">Filobasidiella neoformans</name>
    <dbReference type="NCBI Taxonomy" id="283643"/>
    <lineage>
        <taxon>Eukaryota</taxon>
        <taxon>Fungi</taxon>
        <taxon>Dikarya</taxon>
        <taxon>Basidiomycota</taxon>
        <taxon>Agaricomycotina</taxon>
        <taxon>Tremellomycetes</taxon>
        <taxon>Tremellales</taxon>
        <taxon>Cryptococcaceae</taxon>
        <taxon>Cryptococcus</taxon>
        <taxon>Cryptococcus neoformans species complex</taxon>
    </lineage>
</organism>
<protein>
    <recommendedName>
        <fullName>Endoplasmic reticulum vesicle protein 25</fullName>
    </recommendedName>
</protein>
<keyword id="KW-0256">Endoplasmic reticulum</keyword>
<keyword id="KW-0931">ER-Golgi transport</keyword>
<keyword id="KW-0333">Golgi apparatus</keyword>
<keyword id="KW-0472">Membrane</keyword>
<keyword id="KW-0653">Protein transport</keyword>
<keyword id="KW-0732">Signal</keyword>
<keyword id="KW-0812">Transmembrane</keyword>
<keyword id="KW-1133">Transmembrane helix</keyword>
<keyword id="KW-0813">Transport</keyword>
<evidence type="ECO:0000250" key="1"/>
<evidence type="ECO:0000255" key="2"/>
<evidence type="ECO:0000305" key="3"/>
<comment type="function">
    <text evidence="1">Constituent of COPII-coated endoplasmic reticulum-derived transport vesicles. Required for efficient transport of a subset of secretory proteins to the Golgi. Facilitates retrograde transport from the Golgi to the endoplasmic reticulum (By similarity).</text>
</comment>
<comment type="subcellular location">
    <subcellularLocation>
        <location evidence="1">Endoplasmic reticulum membrane</location>
        <topology evidence="1">Single-pass type I membrane protein</topology>
    </subcellularLocation>
    <subcellularLocation>
        <location evidence="1">Golgi apparatus membrane</location>
        <topology evidence="1">Single-pass type I membrane protein</topology>
    </subcellularLocation>
    <text evidence="1">Recycles between endoplasmic reticulum and Golgi.</text>
</comment>
<comment type="similarity">
    <text evidence="3">Belongs to the EMP24/GP25L family.</text>
</comment>
<feature type="signal peptide" evidence="2">
    <location>
        <begin position="1"/>
        <end position="20"/>
    </location>
</feature>
<feature type="chain" id="PRO_0000410091" description="Endoplasmic reticulum vesicle protein 25">
    <location>
        <begin position="21"/>
        <end position="213"/>
    </location>
</feature>
<feature type="topological domain" description="Lumenal" evidence="2">
    <location>
        <begin position="21"/>
        <end position="181"/>
    </location>
</feature>
<feature type="transmembrane region" description="Helical" evidence="2">
    <location>
        <begin position="182"/>
        <end position="202"/>
    </location>
</feature>
<feature type="topological domain" description="Cytoplasmic" evidence="2">
    <location>
        <begin position="203"/>
        <end position="213"/>
    </location>
</feature>
<feature type="domain" description="GOLD">
    <location>
        <begin position="33"/>
        <end position="122"/>
    </location>
</feature>
<sequence>MILRIPSLLYLFTLLTAVYAVKFDLTSDRNPKPSIIWNFASAHSLVIVTANVPGEPDQQVDIQILDGSERGNVYLSKKDVRGEARLAVTTHESADVGVCLTNRYTGSGNPRVVRSVELDVDIGADAIDYNAIANQESLSILEVEMRKLEAVTKEIVEEMGYLQRREMRMRDTNESTNQRVKVFSVLIICCTIGLGVWQLLHLRSFFKRKYLID</sequence>